<proteinExistence type="evidence at transcript level"/>
<keyword id="KW-0963">Cytoplasm</keyword>
<keyword id="KW-0333">Golgi apparatus</keyword>
<keyword id="KW-1185">Reference proteome</keyword>
<reference key="1">
    <citation type="journal article" date="2004" name="Nature">
        <title>Genome sequence of the Brown Norway rat yields insights into mammalian evolution.</title>
        <authorList>
            <person name="Gibbs R.A."/>
            <person name="Weinstock G.M."/>
            <person name="Metzker M.L."/>
            <person name="Muzny D.M."/>
            <person name="Sodergren E.J."/>
            <person name="Scherer S."/>
            <person name="Scott G."/>
            <person name="Steffen D."/>
            <person name="Worley K.C."/>
            <person name="Burch P.E."/>
            <person name="Okwuonu G."/>
            <person name="Hines S."/>
            <person name="Lewis L."/>
            <person name="Deramo C."/>
            <person name="Delgado O."/>
            <person name="Dugan-Rocha S."/>
            <person name="Miner G."/>
            <person name="Morgan M."/>
            <person name="Hawes A."/>
            <person name="Gill R."/>
            <person name="Holt R.A."/>
            <person name="Adams M.D."/>
            <person name="Amanatides P.G."/>
            <person name="Baden-Tillson H."/>
            <person name="Barnstead M."/>
            <person name="Chin S."/>
            <person name="Evans C.A."/>
            <person name="Ferriera S."/>
            <person name="Fosler C."/>
            <person name="Glodek A."/>
            <person name="Gu Z."/>
            <person name="Jennings D."/>
            <person name="Kraft C.L."/>
            <person name="Nguyen T."/>
            <person name="Pfannkoch C.M."/>
            <person name="Sitter C."/>
            <person name="Sutton G.G."/>
            <person name="Venter J.C."/>
            <person name="Woodage T."/>
            <person name="Smith D."/>
            <person name="Lee H.-M."/>
            <person name="Gustafson E."/>
            <person name="Cahill P."/>
            <person name="Kana A."/>
            <person name="Doucette-Stamm L."/>
            <person name="Weinstock K."/>
            <person name="Fechtel K."/>
            <person name="Weiss R.B."/>
            <person name="Dunn D.M."/>
            <person name="Green E.D."/>
            <person name="Blakesley R.W."/>
            <person name="Bouffard G.G."/>
            <person name="De Jong P.J."/>
            <person name="Osoegawa K."/>
            <person name="Zhu B."/>
            <person name="Marra M."/>
            <person name="Schein J."/>
            <person name="Bosdet I."/>
            <person name="Fjell C."/>
            <person name="Jones S."/>
            <person name="Krzywinski M."/>
            <person name="Mathewson C."/>
            <person name="Siddiqui A."/>
            <person name="Wye N."/>
            <person name="McPherson J."/>
            <person name="Zhao S."/>
            <person name="Fraser C.M."/>
            <person name="Shetty J."/>
            <person name="Shatsman S."/>
            <person name="Geer K."/>
            <person name="Chen Y."/>
            <person name="Abramzon S."/>
            <person name="Nierman W.C."/>
            <person name="Havlak P.H."/>
            <person name="Chen R."/>
            <person name="Durbin K.J."/>
            <person name="Egan A."/>
            <person name="Ren Y."/>
            <person name="Song X.-Z."/>
            <person name="Li B."/>
            <person name="Liu Y."/>
            <person name="Qin X."/>
            <person name="Cawley S."/>
            <person name="Cooney A.J."/>
            <person name="D'Souza L.M."/>
            <person name="Martin K."/>
            <person name="Wu J.Q."/>
            <person name="Gonzalez-Garay M.L."/>
            <person name="Jackson A.R."/>
            <person name="Kalafus K.J."/>
            <person name="McLeod M.P."/>
            <person name="Milosavljevic A."/>
            <person name="Virk D."/>
            <person name="Volkov A."/>
            <person name="Wheeler D.A."/>
            <person name="Zhang Z."/>
            <person name="Bailey J.A."/>
            <person name="Eichler E.E."/>
            <person name="Tuzun E."/>
            <person name="Birney E."/>
            <person name="Mongin E."/>
            <person name="Ureta-Vidal A."/>
            <person name="Woodwark C."/>
            <person name="Zdobnov E."/>
            <person name="Bork P."/>
            <person name="Suyama M."/>
            <person name="Torrents D."/>
            <person name="Alexandersson M."/>
            <person name="Trask B.J."/>
            <person name="Young J.M."/>
            <person name="Huang H."/>
            <person name="Wang H."/>
            <person name="Xing H."/>
            <person name="Daniels S."/>
            <person name="Gietzen D."/>
            <person name="Schmidt J."/>
            <person name="Stevens K."/>
            <person name="Vitt U."/>
            <person name="Wingrove J."/>
            <person name="Camara F."/>
            <person name="Mar Alba M."/>
            <person name="Abril J.F."/>
            <person name="Guigo R."/>
            <person name="Smit A."/>
            <person name="Dubchak I."/>
            <person name="Rubin E.M."/>
            <person name="Couronne O."/>
            <person name="Poliakov A."/>
            <person name="Huebner N."/>
            <person name="Ganten D."/>
            <person name="Goesele C."/>
            <person name="Hummel O."/>
            <person name="Kreitler T."/>
            <person name="Lee Y.-A."/>
            <person name="Monti J."/>
            <person name="Schulz H."/>
            <person name="Zimdahl H."/>
            <person name="Himmelbauer H."/>
            <person name="Lehrach H."/>
            <person name="Jacob H.J."/>
            <person name="Bromberg S."/>
            <person name="Gullings-Handley J."/>
            <person name="Jensen-Seaman M.I."/>
            <person name="Kwitek A.E."/>
            <person name="Lazar J."/>
            <person name="Pasko D."/>
            <person name="Tonellato P.J."/>
            <person name="Twigger S."/>
            <person name="Ponting C.P."/>
            <person name="Duarte J.M."/>
            <person name="Rice S."/>
            <person name="Goodstadt L."/>
            <person name="Beatson S.A."/>
            <person name="Emes R.D."/>
            <person name="Winter E.E."/>
            <person name="Webber C."/>
            <person name="Brandt P."/>
            <person name="Nyakatura G."/>
            <person name="Adetobi M."/>
            <person name="Chiaromonte F."/>
            <person name="Elnitski L."/>
            <person name="Eswara P."/>
            <person name="Hardison R.C."/>
            <person name="Hou M."/>
            <person name="Kolbe D."/>
            <person name="Makova K."/>
            <person name="Miller W."/>
            <person name="Nekrutenko A."/>
            <person name="Riemer C."/>
            <person name="Schwartz S."/>
            <person name="Taylor J."/>
            <person name="Yang S."/>
            <person name="Zhang Y."/>
            <person name="Lindpaintner K."/>
            <person name="Andrews T.D."/>
            <person name="Caccamo M."/>
            <person name="Clamp M."/>
            <person name="Clarke L."/>
            <person name="Curwen V."/>
            <person name="Durbin R.M."/>
            <person name="Eyras E."/>
            <person name="Searle S.M."/>
            <person name="Cooper G.M."/>
            <person name="Batzoglou S."/>
            <person name="Brudno M."/>
            <person name="Sidow A."/>
            <person name="Stone E.A."/>
            <person name="Payseur B.A."/>
            <person name="Bourque G."/>
            <person name="Lopez-Otin C."/>
            <person name="Puente X.S."/>
            <person name="Chakrabarti K."/>
            <person name="Chatterji S."/>
            <person name="Dewey C."/>
            <person name="Pachter L."/>
            <person name="Bray N."/>
            <person name="Yap V.B."/>
            <person name="Caspi A."/>
            <person name="Tesler G."/>
            <person name="Pevzner P.A."/>
            <person name="Haussler D."/>
            <person name="Roskin K.M."/>
            <person name="Baertsch R."/>
            <person name="Clawson H."/>
            <person name="Furey T.S."/>
            <person name="Hinrichs A.S."/>
            <person name="Karolchik D."/>
            <person name="Kent W.J."/>
            <person name="Rosenbloom K.R."/>
            <person name="Trumbower H."/>
            <person name="Weirauch M."/>
            <person name="Cooper D.N."/>
            <person name="Stenson P.D."/>
            <person name="Ma B."/>
            <person name="Brent M."/>
            <person name="Arumugam M."/>
            <person name="Shteynberg D."/>
            <person name="Copley R.R."/>
            <person name="Taylor M.S."/>
            <person name="Riethman H."/>
            <person name="Mudunuri U."/>
            <person name="Peterson J."/>
            <person name="Guyer M."/>
            <person name="Felsenfeld A."/>
            <person name="Old S."/>
            <person name="Mockrin S."/>
            <person name="Collins F.S."/>
        </authorList>
    </citation>
    <scope>NUCLEOTIDE SEQUENCE [LARGE SCALE GENOMIC DNA]</scope>
    <source>
        <strain>Brown Norway</strain>
    </source>
</reference>
<reference key="2">
    <citation type="journal article" date="2004" name="Genome Res.">
        <title>The status, quality, and expansion of the NIH full-length cDNA project: the Mammalian Gene Collection (MGC).</title>
        <authorList>
            <consortium name="The MGC Project Team"/>
        </authorList>
    </citation>
    <scope>NUCLEOTIDE SEQUENCE [LARGE SCALE MRNA]</scope>
    <source>
        <tissue>Prostate</tissue>
    </source>
</reference>
<name>PRRC1_RAT</name>
<comment type="function">
    <text evidence="1">May act as a regulator of the protein kinase A (PKA) during embryonic development.</text>
</comment>
<comment type="subunit">
    <text evidence="2">Interacts with PRKAR1A; resulting in PKA activation.</text>
</comment>
<comment type="subcellular location">
    <subcellularLocation>
        <location evidence="1">Golgi apparatus</location>
    </subcellularLocation>
    <subcellularLocation>
        <location evidence="1">Cytoplasm</location>
    </subcellularLocation>
</comment>
<comment type="similarity">
    <text evidence="4">Belongs to the PRRC1 family.</text>
</comment>
<protein>
    <recommendedName>
        <fullName>Protein PRRC1</fullName>
    </recommendedName>
    <alternativeName>
        <fullName>Proline-rich and coiled-coil-containing protein 1</fullName>
    </alternativeName>
</protein>
<dbReference type="EMBL" id="AABR07072598">
    <property type="status" value="NOT_ANNOTATED_CDS"/>
    <property type="molecule type" value="Genomic_DNA"/>
</dbReference>
<dbReference type="EMBL" id="AC105604">
    <property type="status" value="NOT_ANNOTATED_CDS"/>
    <property type="molecule type" value="Genomic_DNA"/>
</dbReference>
<dbReference type="EMBL" id="BC101903">
    <property type="protein sequence ID" value="AAI01904.1"/>
    <property type="molecule type" value="mRNA"/>
</dbReference>
<dbReference type="RefSeq" id="NP_001029059.2">
    <property type="nucleotide sequence ID" value="NM_001033887.2"/>
</dbReference>
<dbReference type="RefSeq" id="XP_006254808.1">
    <property type="nucleotide sequence ID" value="XM_006254746.4"/>
</dbReference>
<dbReference type="SMR" id="Q3T1I4"/>
<dbReference type="FunCoup" id="Q3T1I4">
    <property type="interactions" value="2083"/>
</dbReference>
<dbReference type="STRING" id="10116.ENSRNOP00000022021"/>
<dbReference type="GlyGen" id="Q3T1I4">
    <property type="glycosylation" value="1 site, 1 O-linked glycan (1 site)"/>
</dbReference>
<dbReference type="PhosphoSitePlus" id="Q3T1I4"/>
<dbReference type="jPOST" id="Q3T1I4"/>
<dbReference type="PaxDb" id="10116-ENSRNOP00000022021"/>
<dbReference type="Ensembl" id="ENSRNOT00000118107.1">
    <property type="protein sequence ID" value="ENSRNOP00000079201.1"/>
    <property type="gene ID" value="ENSRNOG00000016433.7"/>
</dbReference>
<dbReference type="GeneID" id="291444"/>
<dbReference type="KEGG" id="rno:291444"/>
<dbReference type="UCSC" id="RGD:1565632">
    <property type="organism name" value="rat"/>
</dbReference>
<dbReference type="AGR" id="RGD:1565632"/>
<dbReference type="CTD" id="133619"/>
<dbReference type="RGD" id="1565632">
    <property type="gene designation" value="Prrc1"/>
</dbReference>
<dbReference type="eggNOG" id="ENOG502QUZV">
    <property type="taxonomic scope" value="Eukaryota"/>
</dbReference>
<dbReference type="GeneTree" id="ENSGT00390000003837"/>
<dbReference type="InParanoid" id="Q3T1I4"/>
<dbReference type="OMA" id="ELFPDQW"/>
<dbReference type="PhylomeDB" id="Q3T1I4"/>
<dbReference type="PRO" id="PR:Q3T1I4"/>
<dbReference type="Proteomes" id="UP000002494">
    <property type="component" value="Chromosome 18"/>
</dbReference>
<dbReference type="GO" id="GO:0005737">
    <property type="term" value="C:cytoplasm"/>
    <property type="evidence" value="ECO:0000250"/>
    <property type="project" value="UniProtKB"/>
</dbReference>
<dbReference type="GO" id="GO:0005794">
    <property type="term" value="C:Golgi apparatus"/>
    <property type="evidence" value="ECO:0000250"/>
    <property type="project" value="UniProtKB"/>
</dbReference>
<dbReference type="GO" id="GO:0034237">
    <property type="term" value="F:protein kinase A regulatory subunit binding"/>
    <property type="evidence" value="ECO:0000318"/>
    <property type="project" value="GO_Central"/>
</dbReference>
<dbReference type="GO" id="GO:0010669">
    <property type="term" value="P:epithelial structure maintenance"/>
    <property type="evidence" value="ECO:0000318"/>
    <property type="project" value="GO_Central"/>
</dbReference>
<dbReference type="FunFam" id="3.90.950.10:FF:000006">
    <property type="entry name" value="PRRC1 isoform 1"/>
    <property type="match status" value="1"/>
</dbReference>
<dbReference type="Gene3D" id="3.90.950.10">
    <property type="match status" value="1"/>
</dbReference>
<dbReference type="InterPro" id="IPR029001">
    <property type="entry name" value="ITPase-like_fam"/>
</dbReference>
<dbReference type="InterPro" id="IPR026533">
    <property type="entry name" value="NTPase/PRRC1"/>
</dbReference>
<dbReference type="InterPro" id="IPR026534">
    <property type="entry name" value="PRRC1"/>
</dbReference>
<dbReference type="PANTHER" id="PTHR23276">
    <property type="entry name" value="PROTEIN PRRC1"/>
    <property type="match status" value="1"/>
</dbReference>
<dbReference type="PANTHER" id="PTHR23276:SF2">
    <property type="entry name" value="PROTEIN PRRC1"/>
    <property type="match status" value="1"/>
</dbReference>
<dbReference type="Pfam" id="PF01931">
    <property type="entry name" value="NTPase_I-T"/>
    <property type="match status" value="1"/>
</dbReference>
<dbReference type="SUPFAM" id="SSF52972">
    <property type="entry name" value="ITPase-like"/>
    <property type="match status" value="1"/>
</dbReference>
<organism>
    <name type="scientific">Rattus norvegicus</name>
    <name type="common">Rat</name>
    <dbReference type="NCBI Taxonomy" id="10116"/>
    <lineage>
        <taxon>Eukaryota</taxon>
        <taxon>Metazoa</taxon>
        <taxon>Chordata</taxon>
        <taxon>Craniata</taxon>
        <taxon>Vertebrata</taxon>
        <taxon>Euteleostomi</taxon>
        <taxon>Mammalia</taxon>
        <taxon>Eutheria</taxon>
        <taxon>Euarchontoglires</taxon>
        <taxon>Glires</taxon>
        <taxon>Rodentia</taxon>
        <taxon>Myomorpha</taxon>
        <taxon>Muroidea</taxon>
        <taxon>Muridae</taxon>
        <taxon>Murinae</taxon>
        <taxon>Rattus</taxon>
    </lineage>
</organism>
<sequence length="443" mass="46279">MMEESGIETTPPGTPPPHSAGLAAVPSTEAHLAVTSSFSSPNTSGMETVPPHSHSTPQPSLPPVQPSAPPPFVPLSPAPSTPLSGTSVPPSVSPSPATAFSGPPLSHFPPATSASGALLSAPPSGPPISGFSVGTTYDITRGHAGRAPQTPLMPSFSAPPVTGILPAPITQQASMTSLAQGPGTTSAITFPEEQEDPRISRGQDDAPAGGIWGFIKGVAGNPMVKSVLDKTKHSVESMITTLDPGMAPYIKSGGELDIVVTSNKEVKVAAVRDAFQEVFGLAVVVGEAGQSNIAPQPVGYAAGLKGAQERIDSLRRSGTIHEKQTAVSVENFIAELLPDKWFDIGCLVVEDPVHGIRLEAFTQATPVPLEFVQQAQSLTPQDYNLRWSGLLVTVGEVLEKSLLNVTRTDWHLAFTGMSRRQMIYSAAKALAGMYKQRLPPRPL</sequence>
<accession>Q3T1I4</accession>
<accession>A0A8I6G4Z0</accession>
<evidence type="ECO:0000250" key="1">
    <source>
        <dbReference type="UniProtKB" id="Q5XJA3"/>
    </source>
</evidence>
<evidence type="ECO:0000250" key="2">
    <source>
        <dbReference type="UniProtKB" id="Q96M27"/>
    </source>
</evidence>
<evidence type="ECO:0000256" key="3">
    <source>
        <dbReference type="SAM" id="MobiDB-lite"/>
    </source>
</evidence>
<evidence type="ECO:0000305" key="4"/>
<feature type="chain" id="PRO_0000307340" description="Protein PRRC1">
    <location>
        <begin position="1"/>
        <end position="443"/>
    </location>
</feature>
<feature type="region of interest" description="Disordered" evidence="3">
    <location>
        <begin position="1"/>
        <end position="108"/>
    </location>
</feature>
<feature type="region of interest" description="Disordered" evidence="3">
    <location>
        <begin position="139"/>
        <end position="206"/>
    </location>
</feature>
<feature type="compositionally biased region" description="Polar residues" evidence="3">
    <location>
        <begin position="34"/>
        <end position="46"/>
    </location>
</feature>
<feature type="compositionally biased region" description="Pro residues" evidence="3">
    <location>
        <begin position="59"/>
        <end position="80"/>
    </location>
</feature>
<feature type="compositionally biased region" description="Low complexity" evidence="3">
    <location>
        <begin position="81"/>
        <end position="96"/>
    </location>
</feature>
<feature type="compositionally biased region" description="Polar residues" evidence="3">
    <location>
        <begin position="169"/>
        <end position="188"/>
    </location>
</feature>
<feature type="sequence conflict" description="In Ref. 2; AAI01904." evidence="4" ref="2">
    <original>H</original>
    <variation>Y</variation>
    <location>
        <position position="54"/>
    </location>
</feature>
<feature type="sequence conflict" description="In Ref. 2; AAI01904." evidence="4" ref="2">
    <original>P</original>
    <variation>S</variation>
    <location>
        <position position="59"/>
    </location>
</feature>
<gene>
    <name type="primary">Prrc1</name>
</gene>